<protein>
    <recommendedName>
        <fullName evidence="1">Pantothenate kinase</fullName>
        <ecNumber evidence="1">2.7.1.33</ecNumber>
    </recommendedName>
    <alternativeName>
        <fullName evidence="1">Pantothenic acid kinase</fullName>
    </alternativeName>
</protein>
<keyword id="KW-0067">ATP-binding</keyword>
<keyword id="KW-0173">Coenzyme A biosynthesis</keyword>
<keyword id="KW-0963">Cytoplasm</keyword>
<keyword id="KW-0418">Kinase</keyword>
<keyword id="KW-0547">Nucleotide-binding</keyword>
<keyword id="KW-0808">Transferase</keyword>
<comment type="catalytic activity">
    <reaction evidence="1">
        <text>(R)-pantothenate + ATP = (R)-4'-phosphopantothenate + ADP + H(+)</text>
        <dbReference type="Rhea" id="RHEA:16373"/>
        <dbReference type="ChEBI" id="CHEBI:10986"/>
        <dbReference type="ChEBI" id="CHEBI:15378"/>
        <dbReference type="ChEBI" id="CHEBI:29032"/>
        <dbReference type="ChEBI" id="CHEBI:30616"/>
        <dbReference type="ChEBI" id="CHEBI:456216"/>
        <dbReference type="EC" id="2.7.1.33"/>
    </reaction>
</comment>
<comment type="pathway">
    <text evidence="1">Cofactor biosynthesis; coenzyme A biosynthesis; CoA from (R)-pantothenate: step 1/5.</text>
</comment>
<comment type="subcellular location">
    <subcellularLocation>
        <location evidence="1">Cytoplasm</location>
    </subcellularLocation>
</comment>
<comment type="similarity">
    <text evidence="1">Belongs to the prokaryotic pantothenate kinase family.</text>
</comment>
<reference key="1">
    <citation type="submission" date="2006-08" db="EMBL/GenBank/DDBJ databases">
        <title>Complete sequence of Shewanella sp. MR-4.</title>
        <authorList>
            <consortium name="US DOE Joint Genome Institute"/>
            <person name="Copeland A."/>
            <person name="Lucas S."/>
            <person name="Lapidus A."/>
            <person name="Barry K."/>
            <person name="Detter J.C."/>
            <person name="Glavina del Rio T."/>
            <person name="Hammon N."/>
            <person name="Israni S."/>
            <person name="Dalin E."/>
            <person name="Tice H."/>
            <person name="Pitluck S."/>
            <person name="Kiss H."/>
            <person name="Brettin T."/>
            <person name="Bruce D."/>
            <person name="Han C."/>
            <person name="Tapia R."/>
            <person name="Gilna P."/>
            <person name="Schmutz J."/>
            <person name="Larimer F."/>
            <person name="Land M."/>
            <person name="Hauser L."/>
            <person name="Kyrpides N."/>
            <person name="Mikhailova N."/>
            <person name="Nealson K."/>
            <person name="Konstantinidis K."/>
            <person name="Klappenbach J."/>
            <person name="Tiedje J."/>
            <person name="Richardson P."/>
        </authorList>
    </citation>
    <scope>NUCLEOTIDE SEQUENCE [LARGE SCALE GENOMIC DNA]</scope>
    <source>
        <strain>MR-4</strain>
    </source>
</reference>
<evidence type="ECO:0000255" key="1">
    <source>
        <dbReference type="HAMAP-Rule" id="MF_00215"/>
    </source>
</evidence>
<proteinExistence type="inferred from homology"/>
<accession>Q0HNV3</accession>
<gene>
    <name evidence="1" type="primary">coaA</name>
    <name type="ordered locus">Shewmr4_0183</name>
</gene>
<sequence>MTSKNPIQKALYLAFERAQWSVLRDAVPMTLSEQDLENLRGINEKVSLTEVTDIYLPLSRLLNLIVKAKQQRGLVLDEFLGQKPSSSPYIISIAGSVAVGKSTTARILQALLRHWPEHPKVDLVTTDGFLYPLADLKRKGLLQRKGFPESYDMKMLVEFIAAVKSGQAHVNAPIYSHVTYDRIRGQHQTVSQPDILILEGLNVLQTGLDSPVDIRRPFVSDFVDFSIYVDAEEHLLKQWYQERFLQFRKGAFSDEKSYFHHYASLTDDEANVIAAKIWDTINGPNLQLNIQPTRERAHLILQKGQDHLMSHVLLRK</sequence>
<organism>
    <name type="scientific">Shewanella sp. (strain MR-4)</name>
    <dbReference type="NCBI Taxonomy" id="60480"/>
    <lineage>
        <taxon>Bacteria</taxon>
        <taxon>Pseudomonadati</taxon>
        <taxon>Pseudomonadota</taxon>
        <taxon>Gammaproteobacteria</taxon>
        <taxon>Alteromonadales</taxon>
        <taxon>Shewanellaceae</taxon>
        <taxon>Shewanella</taxon>
    </lineage>
</organism>
<name>COAA_SHESM</name>
<feature type="chain" id="PRO_1000043254" description="Pantothenate kinase">
    <location>
        <begin position="1"/>
        <end position="316"/>
    </location>
</feature>
<feature type="binding site" evidence="1">
    <location>
        <begin position="95"/>
        <end position="102"/>
    </location>
    <ligand>
        <name>ATP</name>
        <dbReference type="ChEBI" id="CHEBI:30616"/>
    </ligand>
</feature>
<dbReference type="EC" id="2.7.1.33" evidence="1"/>
<dbReference type="EMBL" id="CP000446">
    <property type="protein sequence ID" value="ABI37264.1"/>
    <property type="molecule type" value="Genomic_DNA"/>
</dbReference>
<dbReference type="RefSeq" id="WP_011621015.1">
    <property type="nucleotide sequence ID" value="NC_008321.1"/>
</dbReference>
<dbReference type="SMR" id="Q0HNV3"/>
<dbReference type="KEGG" id="she:Shewmr4_0183"/>
<dbReference type="HOGENOM" id="CLU_053818_1_1_6"/>
<dbReference type="UniPathway" id="UPA00241">
    <property type="reaction ID" value="UER00352"/>
</dbReference>
<dbReference type="GO" id="GO:0005737">
    <property type="term" value="C:cytoplasm"/>
    <property type="evidence" value="ECO:0007669"/>
    <property type="project" value="UniProtKB-SubCell"/>
</dbReference>
<dbReference type="GO" id="GO:0005524">
    <property type="term" value="F:ATP binding"/>
    <property type="evidence" value="ECO:0007669"/>
    <property type="project" value="UniProtKB-UniRule"/>
</dbReference>
<dbReference type="GO" id="GO:0004594">
    <property type="term" value="F:pantothenate kinase activity"/>
    <property type="evidence" value="ECO:0007669"/>
    <property type="project" value="UniProtKB-UniRule"/>
</dbReference>
<dbReference type="GO" id="GO:0015937">
    <property type="term" value="P:coenzyme A biosynthetic process"/>
    <property type="evidence" value="ECO:0007669"/>
    <property type="project" value="UniProtKB-UniRule"/>
</dbReference>
<dbReference type="CDD" id="cd02025">
    <property type="entry name" value="PanK"/>
    <property type="match status" value="1"/>
</dbReference>
<dbReference type="FunFam" id="3.40.50.300:FF:000242">
    <property type="entry name" value="Pantothenate kinase"/>
    <property type="match status" value="1"/>
</dbReference>
<dbReference type="Gene3D" id="3.40.50.300">
    <property type="entry name" value="P-loop containing nucleotide triphosphate hydrolases"/>
    <property type="match status" value="1"/>
</dbReference>
<dbReference type="HAMAP" id="MF_00215">
    <property type="entry name" value="Pantothen_kinase_1"/>
    <property type="match status" value="1"/>
</dbReference>
<dbReference type="InterPro" id="IPR027417">
    <property type="entry name" value="P-loop_NTPase"/>
</dbReference>
<dbReference type="InterPro" id="IPR004566">
    <property type="entry name" value="PanK"/>
</dbReference>
<dbReference type="InterPro" id="IPR006083">
    <property type="entry name" value="PRK/URK"/>
</dbReference>
<dbReference type="NCBIfam" id="TIGR00554">
    <property type="entry name" value="panK_bact"/>
    <property type="match status" value="1"/>
</dbReference>
<dbReference type="PANTHER" id="PTHR10285">
    <property type="entry name" value="URIDINE KINASE"/>
    <property type="match status" value="1"/>
</dbReference>
<dbReference type="Pfam" id="PF00485">
    <property type="entry name" value="PRK"/>
    <property type="match status" value="1"/>
</dbReference>
<dbReference type="PIRSF" id="PIRSF000545">
    <property type="entry name" value="Pantothenate_kin"/>
    <property type="match status" value="1"/>
</dbReference>
<dbReference type="SUPFAM" id="SSF52540">
    <property type="entry name" value="P-loop containing nucleoside triphosphate hydrolases"/>
    <property type="match status" value="1"/>
</dbReference>